<feature type="chain" id="PRO_0000047466" description="Zinc finger protein 225">
    <location>
        <begin position="1"/>
        <end position="706"/>
    </location>
</feature>
<feature type="domain" description="KRAB" evidence="2">
    <location>
        <begin position="8"/>
        <end position="78"/>
    </location>
</feature>
<feature type="zinc finger region" description="C2H2-type 1" evidence="1">
    <location>
        <begin position="176"/>
        <end position="198"/>
    </location>
</feature>
<feature type="zinc finger region" description="C2H2-type 2" evidence="1">
    <location>
        <begin position="204"/>
        <end position="226"/>
    </location>
</feature>
<feature type="zinc finger region" description="C2H2-type 3" evidence="1">
    <location>
        <begin position="232"/>
        <end position="254"/>
    </location>
</feature>
<feature type="zinc finger region" description="C2H2-type 4" evidence="1">
    <location>
        <begin position="260"/>
        <end position="282"/>
    </location>
</feature>
<feature type="zinc finger region" description="C2H2-type 5" evidence="1">
    <location>
        <begin position="288"/>
        <end position="310"/>
    </location>
</feature>
<feature type="zinc finger region" description="C2H2-type 6" evidence="1">
    <location>
        <begin position="316"/>
        <end position="338"/>
    </location>
</feature>
<feature type="zinc finger region" description="C2H2-type 7" evidence="1">
    <location>
        <begin position="344"/>
        <end position="366"/>
    </location>
</feature>
<feature type="zinc finger region" description="C2H2-type 8" evidence="1">
    <location>
        <begin position="372"/>
        <end position="394"/>
    </location>
</feature>
<feature type="zinc finger region" description="C2H2-type 9" evidence="1">
    <location>
        <begin position="400"/>
        <end position="422"/>
    </location>
</feature>
<feature type="zinc finger region" description="C2H2-type 10" evidence="1">
    <location>
        <begin position="428"/>
        <end position="450"/>
    </location>
</feature>
<feature type="zinc finger region" description="C2H2-type 11" evidence="1">
    <location>
        <begin position="456"/>
        <end position="478"/>
    </location>
</feature>
<feature type="zinc finger region" description="C2H2-type 12" evidence="1">
    <location>
        <begin position="484"/>
        <end position="506"/>
    </location>
</feature>
<feature type="zinc finger region" description="C2H2-type 13" evidence="1">
    <location>
        <begin position="512"/>
        <end position="534"/>
    </location>
</feature>
<feature type="zinc finger region" description="C2H2-type 14" evidence="1">
    <location>
        <begin position="540"/>
        <end position="562"/>
    </location>
</feature>
<feature type="zinc finger region" description="C2H2-type 15" evidence="1">
    <location>
        <begin position="568"/>
        <end position="590"/>
    </location>
</feature>
<feature type="zinc finger region" description="C2H2-type 16" evidence="1">
    <location>
        <begin position="596"/>
        <end position="618"/>
    </location>
</feature>
<feature type="zinc finger region" description="C2H2-type 17" evidence="1">
    <location>
        <begin position="624"/>
        <end position="646"/>
    </location>
</feature>
<feature type="zinc finger region" description="C2H2-type 18; degenerate" evidence="1">
    <location>
        <begin position="652"/>
        <end position="674"/>
    </location>
</feature>
<feature type="cross-link" description="Glycyl lysine isopeptide (Lys-Gly) (interchain with G-Cter in SUMO2)" evidence="4">
    <location>
        <position position="61"/>
    </location>
</feature>
<feature type="sequence variant" id="VAR_033560" description="In dbSNP:rs34863330.">
    <original>Q</original>
    <variation>R</variation>
    <location>
        <position position="50"/>
    </location>
</feature>
<feature type="sequence variant" id="VAR_033561" description="In dbSNP:rs16978738.">
    <original>T</original>
    <variation>S</variation>
    <location>
        <position position="679"/>
    </location>
</feature>
<feature type="sequence conflict" description="In Ref. 1; AAF04107." evidence="3" ref="1">
    <original>RQKP</original>
    <variation>KTET</variation>
    <location>
        <begin position="144"/>
        <end position="147"/>
    </location>
</feature>
<feature type="sequence conflict" description="In Ref. 1; AAF04107." evidence="3" ref="1">
    <original>L</original>
    <variation>Q</variation>
    <location>
        <position position="219"/>
    </location>
</feature>
<protein>
    <recommendedName>
        <fullName>Zinc finger protein 225</fullName>
    </recommendedName>
</protein>
<proteinExistence type="evidence at protein level"/>
<evidence type="ECO:0000255" key="1">
    <source>
        <dbReference type="PROSITE-ProRule" id="PRU00042"/>
    </source>
</evidence>
<evidence type="ECO:0000255" key="2">
    <source>
        <dbReference type="PROSITE-ProRule" id="PRU00119"/>
    </source>
</evidence>
<evidence type="ECO:0000305" key="3"/>
<evidence type="ECO:0007744" key="4">
    <source>
    </source>
</evidence>
<keyword id="KW-0238">DNA-binding</keyword>
<keyword id="KW-1017">Isopeptide bond</keyword>
<keyword id="KW-0479">Metal-binding</keyword>
<keyword id="KW-0539">Nucleus</keyword>
<keyword id="KW-1267">Proteomics identification</keyword>
<keyword id="KW-1185">Reference proteome</keyword>
<keyword id="KW-0677">Repeat</keyword>
<keyword id="KW-0804">Transcription</keyword>
<keyword id="KW-0805">Transcription regulation</keyword>
<keyword id="KW-0832">Ubl conjugation</keyword>
<keyword id="KW-0862">Zinc</keyword>
<keyword id="KW-0863">Zinc-finger</keyword>
<reference key="1">
    <citation type="journal article" date="2003" name="Genome Res.">
        <title>Differential expansion of zinc-finger transcription factor loci in homologous human and mouse gene clusters.</title>
        <authorList>
            <person name="Shannon M."/>
            <person name="Hamilton A.T."/>
            <person name="Gordon L."/>
            <person name="Branscomb E."/>
            <person name="Stubbs L."/>
        </authorList>
    </citation>
    <scope>NUCLEOTIDE SEQUENCE [MRNA]</scope>
</reference>
<reference key="2">
    <citation type="journal article" date="2004" name="Nat. Genet.">
        <title>Complete sequencing and characterization of 21,243 full-length human cDNAs.</title>
        <authorList>
            <person name="Ota T."/>
            <person name="Suzuki Y."/>
            <person name="Nishikawa T."/>
            <person name="Otsuki T."/>
            <person name="Sugiyama T."/>
            <person name="Irie R."/>
            <person name="Wakamatsu A."/>
            <person name="Hayashi K."/>
            <person name="Sato H."/>
            <person name="Nagai K."/>
            <person name="Kimura K."/>
            <person name="Makita H."/>
            <person name="Sekine M."/>
            <person name="Obayashi M."/>
            <person name="Nishi T."/>
            <person name="Shibahara T."/>
            <person name="Tanaka T."/>
            <person name="Ishii S."/>
            <person name="Yamamoto J."/>
            <person name="Saito K."/>
            <person name="Kawai Y."/>
            <person name="Isono Y."/>
            <person name="Nakamura Y."/>
            <person name="Nagahari K."/>
            <person name="Murakami K."/>
            <person name="Yasuda T."/>
            <person name="Iwayanagi T."/>
            <person name="Wagatsuma M."/>
            <person name="Shiratori A."/>
            <person name="Sudo H."/>
            <person name="Hosoiri T."/>
            <person name="Kaku Y."/>
            <person name="Kodaira H."/>
            <person name="Kondo H."/>
            <person name="Sugawara M."/>
            <person name="Takahashi M."/>
            <person name="Kanda K."/>
            <person name="Yokoi T."/>
            <person name="Furuya T."/>
            <person name="Kikkawa E."/>
            <person name="Omura Y."/>
            <person name="Abe K."/>
            <person name="Kamihara K."/>
            <person name="Katsuta N."/>
            <person name="Sato K."/>
            <person name="Tanikawa M."/>
            <person name="Yamazaki M."/>
            <person name="Ninomiya K."/>
            <person name="Ishibashi T."/>
            <person name="Yamashita H."/>
            <person name="Murakawa K."/>
            <person name="Fujimori K."/>
            <person name="Tanai H."/>
            <person name="Kimata M."/>
            <person name="Watanabe M."/>
            <person name="Hiraoka S."/>
            <person name="Chiba Y."/>
            <person name="Ishida S."/>
            <person name="Ono Y."/>
            <person name="Takiguchi S."/>
            <person name="Watanabe S."/>
            <person name="Yosida M."/>
            <person name="Hotuta T."/>
            <person name="Kusano J."/>
            <person name="Kanehori K."/>
            <person name="Takahashi-Fujii A."/>
            <person name="Hara H."/>
            <person name="Tanase T.-O."/>
            <person name="Nomura Y."/>
            <person name="Togiya S."/>
            <person name="Komai F."/>
            <person name="Hara R."/>
            <person name="Takeuchi K."/>
            <person name="Arita M."/>
            <person name="Imose N."/>
            <person name="Musashino K."/>
            <person name="Yuuki H."/>
            <person name="Oshima A."/>
            <person name="Sasaki N."/>
            <person name="Aotsuka S."/>
            <person name="Yoshikawa Y."/>
            <person name="Matsunawa H."/>
            <person name="Ichihara T."/>
            <person name="Shiohata N."/>
            <person name="Sano S."/>
            <person name="Moriya S."/>
            <person name="Momiyama H."/>
            <person name="Satoh N."/>
            <person name="Takami S."/>
            <person name="Terashima Y."/>
            <person name="Suzuki O."/>
            <person name="Nakagawa S."/>
            <person name="Senoh A."/>
            <person name="Mizoguchi H."/>
            <person name="Goto Y."/>
            <person name="Shimizu F."/>
            <person name="Wakebe H."/>
            <person name="Hishigaki H."/>
            <person name="Watanabe T."/>
            <person name="Sugiyama A."/>
            <person name="Takemoto M."/>
            <person name="Kawakami B."/>
            <person name="Yamazaki M."/>
            <person name="Watanabe K."/>
            <person name="Kumagai A."/>
            <person name="Itakura S."/>
            <person name="Fukuzumi Y."/>
            <person name="Fujimori Y."/>
            <person name="Komiyama M."/>
            <person name="Tashiro H."/>
            <person name="Tanigami A."/>
            <person name="Fujiwara T."/>
            <person name="Ono T."/>
            <person name="Yamada K."/>
            <person name="Fujii Y."/>
            <person name="Ozaki K."/>
            <person name="Hirao M."/>
            <person name="Ohmori Y."/>
            <person name="Kawabata A."/>
            <person name="Hikiji T."/>
            <person name="Kobatake N."/>
            <person name="Inagaki H."/>
            <person name="Ikema Y."/>
            <person name="Okamoto S."/>
            <person name="Okitani R."/>
            <person name="Kawakami T."/>
            <person name="Noguchi S."/>
            <person name="Itoh T."/>
            <person name="Shigeta K."/>
            <person name="Senba T."/>
            <person name="Matsumura K."/>
            <person name="Nakajima Y."/>
            <person name="Mizuno T."/>
            <person name="Morinaga M."/>
            <person name="Sasaki M."/>
            <person name="Togashi T."/>
            <person name="Oyama M."/>
            <person name="Hata H."/>
            <person name="Watanabe M."/>
            <person name="Komatsu T."/>
            <person name="Mizushima-Sugano J."/>
            <person name="Satoh T."/>
            <person name="Shirai Y."/>
            <person name="Takahashi Y."/>
            <person name="Nakagawa K."/>
            <person name="Okumura K."/>
            <person name="Nagase T."/>
            <person name="Nomura N."/>
            <person name="Kikuchi H."/>
            <person name="Masuho Y."/>
            <person name="Yamashita R."/>
            <person name="Nakai K."/>
            <person name="Yada T."/>
            <person name="Nakamura Y."/>
            <person name="Ohara O."/>
            <person name="Isogai T."/>
            <person name="Sugano S."/>
        </authorList>
    </citation>
    <scope>NUCLEOTIDE SEQUENCE [LARGE SCALE MRNA]</scope>
    <source>
        <tissue>Testis</tissue>
    </source>
</reference>
<reference key="3">
    <citation type="submission" date="2005-04" db="EMBL/GenBank/DDBJ databases">
        <authorList>
            <person name="Totoki Y."/>
            <person name="Toyoda A."/>
            <person name="Takeda T."/>
            <person name="Sakaki Y."/>
            <person name="Tanaka A."/>
            <person name="Yokoyama S."/>
        </authorList>
    </citation>
    <scope>NUCLEOTIDE SEQUENCE [LARGE SCALE MRNA]</scope>
    <source>
        <tissue>Synovial cell</tissue>
    </source>
</reference>
<reference key="4">
    <citation type="journal article" date="2004" name="Nature">
        <title>The DNA sequence and biology of human chromosome 19.</title>
        <authorList>
            <person name="Grimwood J."/>
            <person name="Gordon L.A."/>
            <person name="Olsen A.S."/>
            <person name="Terry A."/>
            <person name="Schmutz J."/>
            <person name="Lamerdin J.E."/>
            <person name="Hellsten U."/>
            <person name="Goodstein D."/>
            <person name="Couronne O."/>
            <person name="Tran-Gyamfi M."/>
            <person name="Aerts A."/>
            <person name="Altherr M."/>
            <person name="Ashworth L."/>
            <person name="Bajorek E."/>
            <person name="Black S."/>
            <person name="Branscomb E."/>
            <person name="Caenepeel S."/>
            <person name="Carrano A.V."/>
            <person name="Caoile C."/>
            <person name="Chan Y.M."/>
            <person name="Christensen M."/>
            <person name="Cleland C.A."/>
            <person name="Copeland A."/>
            <person name="Dalin E."/>
            <person name="Dehal P."/>
            <person name="Denys M."/>
            <person name="Detter J.C."/>
            <person name="Escobar J."/>
            <person name="Flowers D."/>
            <person name="Fotopulos D."/>
            <person name="Garcia C."/>
            <person name="Georgescu A.M."/>
            <person name="Glavina T."/>
            <person name="Gomez M."/>
            <person name="Gonzales E."/>
            <person name="Groza M."/>
            <person name="Hammon N."/>
            <person name="Hawkins T."/>
            <person name="Haydu L."/>
            <person name="Ho I."/>
            <person name="Huang W."/>
            <person name="Israni S."/>
            <person name="Jett J."/>
            <person name="Kadner K."/>
            <person name="Kimball H."/>
            <person name="Kobayashi A."/>
            <person name="Larionov V."/>
            <person name="Leem S.-H."/>
            <person name="Lopez F."/>
            <person name="Lou Y."/>
            <person name="Lowry S."/>
            <person name="Malfatti S."/>
            <person name="Martinez D."/>
            <person name="McCready P.M."/>
            <person name="Medina C."/>
            <person name="Morgan J."/>
            <person name="Nelson K."/>
            <person name="Nolan M."/>
            <person name="Ovcharenko I."/>
            <person name="Pitluck S."/>
            <person name="Pollard M."/>
            <person name="Popkie A.P."/>
            <person name="Predki P."/>
            <person name="Quan G."/>
            <person name="Ramirez L."/>
            <person name="Rash S."/>
            <person name="Retterer J."/>
            <person name="Rodriguez A."/>
            <person name="Rogers S."/>
            <person name="Salamov A."/>
            <person name="Salazar A."/>
            <person name="She X."/>
            <person name="Smith D."/>
            <person name="Slezak T."/>
            <person name="Solovyev V."/>
            <person name="Thayer N."/>
            <person name="Tice H."/>
            <person name="Tsai M."/>
            <person name="Ustaszewska A."/>
            <person name="Vo N."/>
            <person name="Wagner M."/>
            <person name="Wheeler J."/>
            <person name="Wu K."/>
            <person name="Xie G."/>
            <person name="Yang J."/>
            <person name="Dubchak I."/>
            <person name="Furey T.S."/>
            <person name="DeJong P."/>
            <person name="Dickson M."/>
            <person name="Gordon D."/>
            <person name="Eichler E.E."/>
            <person name="Pennacchio L.A."/>
            <person name="Richardson P."/>
            <person name="Stubbs L."/>
            <person name="Rokhsar D.S."/>
            <person name="Myers R.M."/>
            <person name="Rubin E.M."/>
            <person name="Lucas S.M."/>
        </authorList>
    </citation>
    <scope>NUCLEOTIDE SEQUENCE [LARGE SCALE GENOMIC DNA]</scope>
</reference>
<reference key="5">
    <citation type="submission" date="2005-07" db="EMBL/GenBank/DDBJ databases">
        <authorList>
            <person name="Mural R.J."/>
            <person name="Istrail S."/>
            <person name="Sutton G.G."/>
            <person name="Florea L."/>
            <person name="Halpern A.L."/>
            <person name="Mobarry C.M."/>
            <person name="Lippert R."/>
            <person name="Walenz B."/>
            <person name="Shatkay H."/>
            <person name="Dew I."/>
            <person name="Miller J.R."/>
            <person name="Flanigan M.J."/>
            <person name="Edwards N.J."/>
            <person name="Bolanos R."/>
            <person name="Fasulo D."/>
            <person name="Halldorsson B.V."/>
            <person name="Hannenhalli S."/>
            <person name="Turner R."/>
            <person name="Yooseph S."/>
            <person name="Lu F."/>
            <person name="Nusskern D.R."/>
            <person name="Shue B.C."/>
            <person name="Zheng X.H."/>
            <person name="Zhong F."/>
            <person name="Delcher A.L."/>
            <person name="Huson D.H."/>
            <person name="Kravitz S.A."/>
            <person name="Mouchard L."/>
            <person name="Reinert K."/>
            <person name="Remington K.A."/>
            <person name="Clark A.G."/>
            <person name="Waterman M.S."/>
            <person name="Eichler E.E."/>
            <person name="Adams M.D."/>
            <person name="Hunkapiller M.W."/>
            <person name="Myers E.W."/>
            <person name="Venter J.C."/>
        </authorList>
    </citation>
    <scope>NUCLEOTIDE SEQUENCE [LARGE SCALE GENOMIC DNA]</scope>
</reference>
<reference key="6">
    <citation type="journal article" date="2004" name="Genome Res.">
        <title>The status, quality, and expansion of the NIH full-length cDNA project: the Mammalian Gene Collection (MGC).</title>
        <authorList>
            <consortium name="The MGC Project Team"/>
        </authorList>
    </citation>
    <scope>NUCLEOTIDE SEQUENCE [LARGE SCALE MRNA]</scope>
</reference>
<reference key="7">
    <citation type="journal article" date="2017" name="Nat. Struct. Mol. Biol.">
        <title>Site-specific mapping of the human SUMO proteome reveals co-modification with phosphorylation.</title>
        <authorList>
            <person name="Hendriks I.A."/>
            <person name="Lyon D."/>
            <person name="Young C."/>
            <person name="Jensen L.J."/>
            <person name="Vertegaal A.C."/>
            <person name="Nielsen M.L."/>
        </authorList>
    </citation>
    <scope>SUMOYLATION [LARGE SCALE ANALYSIS] AT LYS-61</scope>
    <scope>IDENTIFICATION BY MASS SPECTROMETRY [LARGE SCALE ANALYSIS]</scope>
</reference>
<comment type="function">
    <text>May be involved in transcriptional regulation.</text>
</comment>
<comment type="interaction">
    <interactant intactId="EBI-21856539">
        <id>Q9UK10</id>
    </interactant>
    <interactant intactId="EBI-720609">
        <id>O76024</id>
        <label>WFS1</label>
    </interactant>
    <organismsDiffer>false</organismsDiffer>
    <experiments>3</experiments>
</comment>
<comment type="subcellular location">
    <subcellularLocation>
        <location evidence="3">Nucleus</location>
    </subcellularLocation>
</comment>
<comment type="similarity">
    <text evidence="3">Belongs to the krueppel C2H2-type zinc-finger protein family.</text>
</comment>
<gene>
    <name type="primary">ZNF225</name>
</gene>
<accession>Q9UK10</accession>
<accession>A8K8S2</accession>
<accession>Q53F12</accession>
<accession>Q9NS46</accession>
<accession>Q9UID8</accession>
<name>ZN225_HUMAN</name>
<dbReference type="EMBL" id="AF187991">
    <property type="protein sequence ID" value="AAF04107.1"/>
    <property type="molecule type" value="mRNA"/>
</dbReference>
<dbReference type="EMBL" id="AK223477">
    <property type="protein sequence ID" value="BAD97197.1"/>
    <property type="molecule type" value="mRNA"/>
</dbReference>
<dbReference type="EMBL" id="AK292437">
    <property type="protein sequence ID" value="BAF85126.1"/>
    <property type="molecule type" value="mRNA"/>
</dbReference>
<dbReference type="EMBL" id="AC021092">
    <property type="protein sequence ID" value="AAF24967.1"/>
    <property type="molecule type" value="Genomic_DNA"/>
</dbReference>
<dbReference type="EMBL" id="AC074331">
    <property type="protein sequence ID" value="AAF88105.1"/>
    <property type="molecule type" value="Genomic_DNA"/>
</dbReference>
<dbReference type="EMBL" id="CH471126">
    <property type="protein sequence ID" value="EAW57255.1"/>
    <property type="molecule type" value="Genomic_DNA"/>
</dbReference>
<dbReference type="EMBL" id="BC108912">
    <property type="protein sequence ID" value="AAI08913.1"/>
    <property type="molecule type" value="mRNA"/>
</dbReference>
<dbReference type="CCDS" id="CCDS46100.1"/>
<dbReference type="RefSeq" id="NP_001308614.1">
    <property type="nucleotide sequence ID" value="NM_001321685.2"/>
</dbReference>
<dbReference type="RefSeq" id="NP_037494.2">
    <property type="nucleotide sequence ID" value="NM_013362.4"/>
</dbReference>
<dbReference type="RefSeq" id="XP_011525587.1">
    <property type="nucleotide sequence ID" value="XM_011527285.3"/>
</dbReference>
<dbReference type="RefSeq" id="XP_011525588.1">
    <property type="nucleotide sequence ID" value="XM_011527286.3"/>
</dbReference>
<dbReference type="RefSeq" id="XP_054178002.1">
    <property type="nucleotide sequence ID" value="XM_054322027.1"/>
</dbReference>
<dbReference type="RefSeq" id="XP_054178003.1">
    <property type="nucleotide sequence ID" value="XM_054322028.1"/>
</dbReference>
<dbReference type="SMR" id="Q9UK10"/>
<dbReference type="BioGRID" id="113551">
    <property type="interactions" value="6"/>
</dbReference>
<dbReference type="FunCoup" id="Q9UK10">
    <property type="interactions" value="24"/>
</dbReference>
<dbReference type="IntAct" id="Q9UK10">
    <property type="interactions" value="4"/>
</dbReference>
<dbReference type="STRING" id="9606.ENSP00000262894"/>
<dbReference type="iPTMnet" id="Q9UK10"/>
<dbReference type="PhosphoSitePlus" id="Q9UK10"/>
<dbReference type="BioMuta" id="ZNF225"/>
<dbReference type="DMDM" id="110825755"/>
<dbReference type="jPOST" id="Q9UK10"/>
<dbReference type="MassIVE" id="Q9UK10"/>
<dbReference type="PaxDb" id="9606-ENSP00000262894"/>
<dbReference type="PeptideAtlas" id="Q9UK10"/>
<dbReference type="ProteomicsDB" id="84701"/>
<dbReference type="Antibodypedia" id="49032">
    <property type="antibodies" value="133 antibodies from 22 providers"/>
</dbReference>
<dbReference type="DNASU" id="7768"/>
<dbReference type="Ensembl" id="ENST00000262894.11">
    <property type="protein sequence ID" value="ENSP00000262894.5"/>
    <property type="gene ID" value="ENSG00000256294.8"/>
</dbReference>
<dbReference type="Ensembl" id="ENST00000590612.1">
    <property type="protein sequence ID" value="ENSP00000468686.1"/>
    <property type="gene ID" value="ENSG00000256294.8"/>
</dbReference>
<dbReference type="GeneID" id="7768"/>
<dbReference type="KEGG" id="hsa:7768"/>
<dbReference type="MANE-Select" id="ENST00000262894.11">
    <property type="protein sequence ID" value="ENSP00000262894.5"/>
    <property type="RefSeq nucleotide sequence ID" value="NM_013362.4"/>
    <property type="RefSeq protein sequence ID" value="NP_037494.2"/>
</dbReference>
<dbReference type="UCSC" id="uc002oyj.2">
    <property type="organism name" value="human"/>
</dbReference>
<dbReference type="AGR" id="HGNC:13018"/>
<dbReference type="CTD" id="7768"/>
<dbReference type="GeneCards" id="ZNF225"/>
<dbReference type="HGNC" id="HGNC:13018">
    <property type="gene designation" value="ZNF225"/>
</dbReference>
<dbReference type="HPA" id="ENSG00000256294">
    <property type="expression patterns" value="Low tissue specificity"/>
</dbReference>
<dbReference type="neXtProt" id="NX_Q9UK10"/>
<dbReference type="OpenTargets" id="ENSG00000256294"/>
<dbReference type="PharmGKB" id="PA37597"/>
<dbReference type="VEuPathDB" id="HostDB:ENSG00000256294"/>
<dbReference type="eggNOG" id="KOG1721">
    <property type="taxonomic scope" value="Eukaryota"/>
</dbReference>
<dbReference type="GeneTree" id="ENSGT00940000160225"/>
<dbReference type="HOGENOM" id="CLU_002678_44_5_1"/>
<dbReference type="InParanoid" id="Q9UK10"/>
<dbReference type="OMA" id="FSKEDDM"/>
<dbReference type="OrthoDB" id="9411774at2759"/>
<dbReference type="PAN-GO" id="Q9UK10">
    <property type="GO annotations" value="4 GO annotations based on evolutionary models"/>
</dbReference>
<dbReference type="PhylomeDB" id="Q9UK10"/>
<dbReference type="TreeFam" id="TF341885"/>
<dbReference type="PathwayCommons" id="Q9UK10"/>
<dbReference type="Reactome" id="R-HSA-212436">
    <property type="pathway name" value="Generic Transcription Pathway"/>
</dbReference>
<dbReference type="SignaLink" id="Q9UK10"/>
<dbReference type="BioGRID-ORCS" id="7768">
    <property type="hits" value="14 hits in 1184 CRISPR screens"/>
</dbReference>
<dbReference type="GeneWiki" id="ZNF225"/>
<dbReference type="GenomeRNAi" id="7768"/>
<dbReference type="Pharos" id="Q9UK10">
    <property type="development level" value="Tdark"/>
</dbReference>
<dbReference type="PRO" id="PR:Q9UK10"/>
<dbReference type="Proteomes" id="UP000005640">
    <property type="component" value="Chromosome 19"/>
</dbReference>
<dbReference type="RNAct" id="Q9UK10">
    <property type="molecule type" value="protein"/>
</dbReference>
<dbReference type="Bgee" id="ENSG00000256294">
    <property type="expression patterns" value="Expressed in primordial germ cell in gonad and 133 other cell types or tissues"/>
</dbReference>
<dbReference type="ExpressionAtlas" id="Q9UK10">
    <property type="expression patterns" value="baseline and differential"/>
</dbReference>
<dbReference type="GO" id="GO:0005634">
    <property type="term" value="C:nucleus"/>
    <property type="evidence" value="ECO:0000318"/>
    <property type="project" value="GO_Central"/>
</dbReference>
<dbReference type="GO" id="GO:0003677">
    <property type="term" value="F:DNA binding"/>
    <property type="evidence" value="ECO:0007669"/>
    <property type="project" value="UniProtKB-KW"/>
</dbReference>
<dbReference type="GO" id="GO:0008270">
    <property type="term" value="F:zinc ion binding"/>
    <property type="evidence" value="ECO:0007669"/>
    <property type="project" value="UniProtKB-KW"/>
</dbReference>
<dbReference type="GO" id="GO:0006357">
    <property type="term" value="P:regulation of transcription by RNA polymerase II"/>
    <property type="evidence" value="ECO:0000318"/>
    <property type="project" value="GO_Central"/>
</dbReference>
<dbReference type="CDD" id="cd07765">
    <property type="entry name" value="KRAB_A-box"/>
    <property type="match status" value="1"/>
</dbReference>
<dbReference type="FunFam" id="3.30.160.60:FF:002715">
    <property type="match status" value="1"/>
</dbReference>
<dbReference type="FunFam" id="3.30.160.60:FF:000709">
    <property type="entry name" value="GDNF-inducible zinc finger protein 1"/>
    <property type="match status" value="1"/>
</dbReference>
<dbReference type="FunFam" id="3.30.160.60:FF:002775">
    <property type="entry name" value="Uncharacterized protein"/>
    <property type="match status" value="1"/>
</dbReference>
<dbReference type="FunFam" id="3.30.160.60:FF:000478">
    <property type="entry name" value="Zinc finger protein 133"/>
    <property type="match status" value="1"/>
</dbReference>
<dbReference type="FunFam" id="3.30.160.60:FF:000053">
    <property type="entry name" value="zinc finger protein 182 isoform X1"/>
    <property type="match status" value="1"/>
</dbReference>
<dbReference type="FunFam" id="3.30.160.60:FF:000295">
    <property type="entry name" value="zinc finger protein 19"/>
    <property type="match status" value="1"/>
</dbReference>
<dbReference type="FunFam" id="3.30.160.60:FF:002101">
    <property type="entry name" value="Zinc finger protein 224"/>
    <property type="match status" value="1"/>
</dbReference>
<dbReference type="FunFam" id="3.30.160.60:FF:001634">
    <property type="entry name" value="Zinc finger protein 224, isoform CRA_a"/>
    <property type="match status" value="1"/>
</dbReference>
<dbReference type="FunFam" id="3.30.160.60:FF:002239">
    <property type="entry name" value="Zinc finger protein 226"/>
    <property type="match status" value="1"/>
</dbReference>
<dbReference type="FunFam" id="3.30.160.60:FF:000671">
    <property type="entry name" value="Zinc finger protein 26"/>
    <property type="match status" value="1"/>
</dbReference>
<dbReference type="FunFam" id="3.30.160.60:FF:002180">
    <property type="entry name" value="Zinc finger protein 284"/>
    <property type="match status" value="1"/>
</dbReference>
<dbReference type="FunFam" id="3.30.160.60:FF:002153">
    <property type="entry name" value="Zinc finger protein 30"/>
    <property type="match status" value="1"/>
</dbReference>
<dbReference type="FunFam" id="3.30.160.60:FF:001286">
    <property type="entry name" value="Zinc finger protein 485"/>
    <property type="match status" value="1"/>
</dbReference>
<dbReference type="FunFam" id="3.30.160.60:FF:001289">
    <property type="entry name" value="Zinc finger protein 574"/>
    <property type="match status" value="1"/>
</dbReference>
<dbReference type="FunFam" id="3.30.160.60:FF:000213">
    <property type="entry name" value="Zinc finger protein 624"/>
    <property type="match status" value="1"/>
</dbReference>
<dbReference type="FunFam" id="3.30.160.60:FF:000176">
    <property type="entry name" value="zinc finger protein 70"/>
    <property type="match status" value="1"/>
</dbReference>
<dbReference type="FunFam" id="3.30.160.60:FF:000710">
    <property type="entry name" value="Zinc finger protein 768"/>
    <property type="match status" value="1"/>
</dbReference>
<dbReference type="Gene3D" id="6.10.140.140">
    <property type="match status" value="1"/>
</dbReference>
<dbReference type="Gene3D" id="3.30.160.60">
    <property type="entry name" value="Classic Zinc Finger"/>
    <property type="match status" value="18"/>
</dbReference>
<dbReference type="InterPro" id="IPR050589">
    <property type="entry name" value="Ikaros_C2H2-ZF"/>
</dbReference>
<dbReference type="InterPro" id="IPR001909">
    <property type="entry name" value="KRAB"/>
</dbReference>
<dbReference type="InterPro" id="IPR036051">
    <property type="entry name" value="KRAB_dom_sf"/>
</dbReference>
<dbReference type="InterPro" id="IPR036236">
    <property type="entry name" value="Znf_C2H2_sf"/>
</dbReference>
<dbReference type="InterPro" id="IPR013087">
    <property type="entry name" value="Znf_C2H2_type"/>
</dbReference>
<dbReference type="PANTHER" id="PTHR24404">
    <property type="entry name" value="ZINC FINGER PROTEIN"/>
    <property type="match status" value="1"/>
</dbReference>
<dbReference type="PANTHER" id="PTHR24404:SF100">
    <property type="entry name" value="ZINC FINGER PROTEIN 501"/>
    <property type="match status" value="1"/>
</dbReference>
<dbReference type="Pfam" id="PF01352">
    <property type="entry name" value="KRAB"/>
    <property type="match status" value="1"/>
</dbReference>
<dbReference type="Pfam" id="PF00096">
    <property type="entry name" value="zf-C2H2"/>
    <property type="match status" value="15"/>
</dbReference>
<dbReference type="SMART" id="SM00349">
    <property type="entry name" value="KRAB"/>
    <property type="match status" value="1"/>
</dbReference>
<dbReference type="SMART" id="SM00355">
    <property type="entry name" value="ZnF_C2H2"/>
    <property type="match status" value="17"/>
</dbReference>
<dbReference type="SUPFAM" id="SSF57667">
    <property type="entry name" value="beta-beta-alpha zinc fingers"/>
    <property type="match status" value="11"/>
</dbReference>
<dbReference type="SUPFAM" id="SSF109640">
    <property type="entry name" value="KRAB domain (Kruppel-associated box)"/>
    <property type="match status" value="1"/>
</dbReference>
<dbReference type="PROSITE" id="PS50805">
    <property type="entry name" value="KRAB"/>
    <property type="match status" value="1"/>
</dbReference>
<dbReference type="PROSITE" id="PS00028">
    <property type="entry name" value="ZINC_FINGER_C2H2_1"/>
    <property type="match status" value="17"/>
</dbReference>
<dbReference type="PROSITE" id="PS50157">
    <property type="entry name" value="ZINC_FINGER_C2H2_2"/>
    <property type="match status" value="18"/>
</dbReference>
<sequence>MTTLKEAVTFKDVAVVFTEEELRLLDLAQRKLYREVMLENFRNLLSVGHQSLHRDTFHFLKEEKFWMMETATQREGNLGGKIQMEMETVSESGTHEGLFSHQTWEQISSDLTRFQDSMVNSFQFSKQDDMPCQVDAGLSIIHVRQKPSEGRTCKKSFSDVSVLDLHQQLQSREKSHTCDECGKSFCYSSALRIHQRVHMGEKLYNCDVCGKEFNQSSHLQIHQRIHTGEKPFKCEQCGKGFSRRSGLYVHRKLHTGVKPHICEKCGKAFIHDSQLQEHQRIHTGEKPFKCDICCKSFRSRANLNRHSMVHMREKPFRCDTCGKSFGLKSALNSHRMVHTGEKRYKCEECGKRFIYRQDLYKHQIDHTGEKPYNCKECGKSFRWASGLSRHVRVHSGETTFKCEECGKGFYTNSQRYSHQRAHSGEKPYRCEECGKGYKRRLDLDFHQRVHRGEKPYNCKECGKSFGWASCLLNHQRIHSGEKPFKCEECGKRFTQNSQLYTHRRVHSGEKPFKCEECGKRFTQNSQLYSHRRVHTGVKPYKCEECGKGFNSKFNLDMHQRVHTGERPYNCKECGKSFSRASSILNHKRLHGDEKPFKCEECGKRFTENSQLHSHQRVHTGEKPYKCEKCGKSFRWASTHLTHQRLHSREKLLQCEDCGKSIVHSSCLKDQQRDQSGEKTSKCEDCGKRYKRRLNLDTLLSLFLNDT</sequence>
<organism>
    <name type="scientific">Homo sapiens</name>
    <name type="common">Human</name>
    <dbReference type="NCBI Taxonomy" id="9606"/>
    <lineage>
        <taxon>Eukaryota</taxon>
        <taxon>Metazoa</taxon>
        <taxon>Chordata</taxon>
        <taxon>Craniata</taxon>
        <taxon>Vertebrata</taxon>
        <taxon>Euteleostomi</taxon>
        <taxon>Mammalia</taxon>
        <taxon>Eutheria</taxon>
        <taxon>Euarchontoglires</taxon>
        <taxon>Primates</taxon>
        <taxon>Haplorrhini</taxon>
        <taxon>Catarrhini</taxon>
        <taxon>Hominidae</taxon>
        <taxon>Homo</taxon>
    </lineage>
</organism>